<comment type="function">
    <text evidence="1">Part of an energy-coupled inorganic carbon pump.</text>
</comment>
<comment type="cofactor">
    <cofactor evidence="1">
        <name>Zn(2+)</name>
        <dbReference type="ChEBI" id="CHEBI:29105"/>
    </cofactor>
</comment>
<comment type="subunit">
    <text evidence="1">Forms a complex with DabB.</text>
</comment>
<comment type="subcellular location">
    <subcellularLocation>
        <location evidence="1">Cell membrane</location>
        <topology evidence="1">Peripheral membrane protein</topology>
    </subcellularLocation>
</comment>
<comment type="similarity">
    <text evidence="1">Belongs to the inorganic carbon transporter (TC 9.A.2) DabA family.</text>
</comment>
<organism>
    <name type="scientific">Bacillus cereus (strain G9842)</name>
    <dbReference type="NCBI Taxonomy" id="405531"/>
    <lineage>
        <taxon>Bacteria</taxon>
        <taxon>Bacillati</taxon>
        <taxon>Bacillota</taxon>
        <taxon>Bacilli</taxon>
        <taxon>Bacillales</taxon>
        <taxon>Bacillaceae</taxon>
        <taxon>Bacillus</taxon>
        <taxon>Bacillus cereus group</taxon>
    </lineage>
</organism>
<protein>
    <recommendedName>
        <fullName evidence="1">Probable inorganic carbon transporter subunit DabA</fullName>
    </recommendedName>
</protein>
<proteinExistence type="inferred from homology"/>
<sequence length="868" mass="98460">MSILSILKKDTNIDMQENNINDLVASASRVIAPLWPISTFAAHHPWMGLEKQSFEQVADWLKEIRNVDIYPSAAMIHSAKAKGEIEESFLQSGLSRWLDSQSFHIPRKKVEQFCQVALKLEELPSSLLSLPEVNKLAEEMSYINTESMKDSSLQPVSSLIENQKGENLSDILNYHIIKWCKLYLDDSGSSWTMPNREKGFYRAWQHLIKFDPALSKNERKVLKDWPQDAQVALARALSELGISESNIQAYLEGHLLSLPGWAGMIRWRSQQSIQEQELLIEYLAVRISMELAITKPYLPLKNQKVEKKVAIVPLIASWIYWGNISTREWLQMPAAEQSELLVFAYRFDENIRRKLWLEAWEQTHAEQLRKKIASKQRATNDKKRVLAQLAFCIDVRSEPFRRHLEKLGPFETFGIAGFFGLPIATSELGSNNNHPSLPVILKPKHQIKELTNENELKSYEQRKRVGSSVRYTFKTMKQNVLTSMALPELSGPLFGLQMVTRSFVPRGVGAFIRNLRKTMLQKPDTTFSLNHVHDTKGEIPIGFTKEEKVNYVRQALKMVGLTEKFAPLVVMCGHSSQSTNNPYAAALECGACGGAAGGFNARVFATLCNLPEVREALAAEGIKIPEDTIFAAAEHKTTVDELEWIYVPELSEAAQEAFDCIESIMPNVSQHANRERLTQLPNFKTKIKNASKEAHRFAEDWSEIRPEWGLARNASFIIGQRELTQDCDLEGRAFLHNYDWKQDESGDILANIIAGPGTVAQWINLQYYASTVAPHYYGSGNKTTQTVTAGLGVMQGNASDLLPGLPWQSVMQSDSETYHSPLRLLIVIQAPIEYIERLLNNDFTFREKVQNGWVRLASVDPEGRWKNW</sequence>
<reference key="1">
    <citation type="submission" date="2008-10" db="EMBL/GenBank/DDBJ databases">
        <title>Genome sequence of Bacillus cereus G9842.</title>
        <authorList>
            <person name="Dodson R.J."/>
            <person name="Durkin A.S."/>
            <person name="Rosovitz M.J."/>
            <person name="Rasko D.A."/>
            <person name="Hoffmaster A."/>
            <person name="Ravel J."/>
            <person name="Sutton G."/>
        </authorList>
    </citation>
    <scope>NUCLEOTIDE SEQUENCE [LARGE SCALE GENOMIC DNA]</scope>
    <source>
        <strain>G9842</strain>
    </source>
</reference>
<name>DABA_BACC2</name>
<dbReference type="EMBL" id="CP001186">
    <property type="protein sequence ID" value="ACK94248.1"/>
    <property type="molecule type" value="Genomic_DNA"/>
</dbReference>
<dbReference type="RefSeq" id="WP_000025795.1">
    <property type="nucleotide sequence ID" value="NC_011772.1"/>
</dbReference>
<dbReference type="SMR" id="B7IMQ6"/>
<dbReference type="KEGG" id="bcg:BCG9842_B2073"/>
<dbReference type="HOGENOM" id="CLU_009885_0_0_9"/>
<dbReference type="Proteomes" id="UP000006744">
    <property type="component" value="Chromosome"/>
</dbReference>
<dbReference type="GO" id="GO:0005886">
    <property type="term" value="C:plasma membrane"/>
    <property type="evidence" value="ECO:0007669"/>
    <property type="project" value="UniProtKB-SubCell"/>
</dbReference>
<dbReference type="GO" id="GO:0008270">
    <property type="term" value="F:zinc ion binding"/>
    <property type="evidence" value="ECO:0007669"/>
    <property type="project" value="UniProtKB-UniRule"/>
</dbReference>
<dbReference type="HAMAP" id="MF_01871">
    <property type="entry name" value="DabA"/>
    <property type="match status" value="1"/>
</dbReference>
<dbReference type="InterPro" id="IPR018752">
    <property type="entry name" value="DabA"/>
</dbReference>
<dbReference type="PANTHER" id="PTHR38344:SF1">
    <property type="entry name" value="INORGANIC CARBON TRANSPORTER SUBUNIT DABA-RELATED"/>
    <property type="match status" value="1"/>
</dbReference>
<dbReference type="PANTHER" id="PTHR38344">
    <property type="entry name" value="UPF0753 PROTEIN AQ_863"/>
    <property type="match status" value="1"/>
</dbReference>
<dbReference type="Pfam" id="PF10070">
    <property type="entry name" value="DabA"/>
    <property type="match status" value="1"/>
</dbReference>
<accession>B7IMQ6</accession>
<feature type="chain" id="PRO_0000387243" description="Probable inorganic carbon transporter subunit DabA">
    <location>
        <begin position="1"/>
        <end position="868"/>
    </location>
</feature>
<feature type="binding site" evidence="1">
    <location>
        <position position="392"/>
    </location>
    <ligand>
        <name>Zn(2+)</name>
        <dbReference type="ChEBI" id="CHEBI:29105"/>
    </ligand>
</feature>
<feature type="binding site" evidence="1">
    <location>
        <position position="394"/>
    </location>
    <ligand>
        <name>Zn(2+)</name>
        <dbReference type="ChEBI" id="CHEBI:29105"/>
    </ligand>
</feature>
<feature type="binding site" evidence="1">
    <location>
        <position position="574"/>
    </location>
    <ligand>
        <name>Zn(2+)</name>
        <dbReference type="ChEBI" id="CHEBI:29105"/>
    </ligand>
</feature>
<feature type="binding site" evidence="1">
    <location>
        <position position="589"/>
    </location>
    <ligand>
        <name>Zn(2+)</name>
        <dbReference type="ChEBI" id="CHEBI:29105"/>
    </ligand>
</feature>
<keyword id="KW-1003">Cell membrane</keyword>
<keyword id="KW-0472">Membrane</keyword>
<keyword id="KW-0479">Metal-binding</keyword>
<keyword id="KW-0813">Transport</keyword>
<keyword id="KW-0862">Zinc</keyword>
<evidence type="ECO:0000255" key="1">
    <source>
        <dbReference type="HAMAP-Rule" id="MF_01871"/>
    </source>
</evidence>
<gene>
    <name evidence="1" type="primary">dabA</name>
    <name type="ordered locus">BCG9842_B2073</name>
</gene>